<dbReference type="EC" id="1.14.15.6" evidence="4 5"/>
<dbReference type="EMBL" id="X13768">
    <property type="protein sequence ID" value="CAA32018.1"/>
    <property type="molecule type" value="mRNA"/>
</dbReference>
<dbReference type="PIR" id="S03188">
    <property type="entry name" value="S03188"/>
</dbReference>
<dbReference type="RefSeq" id="NP_999592.1">
    <property type="nucleotide sequence ID" value="NM_214427.1"/>
</dbReference>
<dbReference type="SMR" id="P10612"/>
<dbReference type="FunCoup" id="P10612">
    <property type="interactions" value="65"/>
</dbReference>
<dbReference type="STRING" id="9823.ENSSSCP00000023389"/>
<dbReference type="PaxDb" id="9823-ENSSSCP00000023389"/>
<dbReference type="PeptideAtlas" id="P10612"/>
<dbReference type="Ensembl" id="ENSSSCT00000027131.3">
    <property type="protein sequence ID" value="ENSSSCP00000023389.2"/>
    <property type="gene ID" value="ENSSSCG00000025273.3"/>
</dbReference>
<dbReference type="Ensembl" id="ENSSSCT00025071481.1">
    <property type="protein sequence ID" value="ENSSSCP00025030963.1"/>
    <property type="gene ID" value="ENSSSCG00025052195.1"/>
</dbReference>
<dbReference type="Ensembl" id="ENSSSCT00035025514.1">
    <property type="protein sequence ID" value="ENSSSCP00035009655.1"/>
    <property type="gene ID" value="ENSSSCG00035019678.1"/>
</dbReference>
<dbReference type="Ensembl" id="ENSSSCT00045034038.1">
    <property type="protein sequence ID" value="ENSSSCP00045023617.1"/>
    <property type="gene ID" value="ENSSSCG00045019950.1"/>
</dbReference>
<dbReference type="Ensembl" id="ENSSSCT00050038177.1">
    <property type="protein sequence ID" value="ENSSSCP00050015825.1"/>
    <property type="gene ID" value="ENSSSCG00050028382.1"/>
</dbReference>
<dbReference type="Ensembl" id="ENSSSCT00055028793.1">
    <property type="protein sequence ID" value="ENSSSCP00055022943.1"/>
    <property type="gene ID" value="ENSSSCG00055014425.1"/>
</dbReference>
<dbReference type="Ensembl" id="ENSSSCT00065060792.1">
    <property type="protein sequence ID" value="ENSSSCP00065026328.1"/>
    <property type="gene ID" value="ENSSSCG00065044449.1"/>
</dbReference>
<dbReference type="Ensembl" id="ENSSSCT00070020379.1">
    <property type="protein sequence ID" value="ENSSSCP00070016933.1"/>
    <property type="gene ID" value="ENSSSCG00070010472.1"/>
</dbReference>
<dbReference type="Ensembl" id="ENSSSCT00090036648">
    <property type="protein sequence ID" value="ENSSSCP00090022825"/>
    <property type="gene ID" value="ENSSSCG00090020670"/>
</dbReference>
<dbReference type="Ensembl" id="ENSSSCT00105003373">
    <property type="protein sequence ID" value="ENSSSCP00105002540"/>
    <property type="gene ID" value="ENSSSCG00105001723"/>
</dbReference>
<dbReference type="Ensembl" id="ENSSSCT00110031663">
    <property type="protein sequence ID" value="ENSSSCP00110021378"/>
    <property type="gene ID" value="ENSSSCG00110016625"/>
</dbReference>
<dbReference type="Ensembl" id="ENSSSCT00115024361">
    <property type="protein sequence ID" value="ENSSSCP00115023102"/>
    <property type="gene ID" value="ENSSSCG00115014028"/>
</dbReference>
<dbReference type="GeneID" id="403329"/>
<dbReference type="KEGG" id="ssc:403329"/>
<dbReference type="CTD" id="1583"/>
<dbReference type="VGNC" id="VGNC:103363">
    <property type="gene designation" value="CYP11A1"/>
</dbReference>
<dbReference type="eggNOG" id="KOG0159">
    <property type="taxonomic scope" value="Eukaryota"/>
</dbReference>
<dbReference type="GeneTree" id="ENSGT00940000158575"/>
<dbReference type="HOGENOM" id="CLU_001570_28_4_1"/>
<dbReference type="InParanoid" id="P10612"/>
<dbReference type="OMA" id="QVANYAM"/>
<dbReference type="OrthoDB" id="3945418at2759"/>
<dbReference type="Reactome" id="R-SSC-196108">
    <property type="pathway name" value="Pregnenolone biosynthesis"/>
</dbReference>
<dbReference type="Reactome" id="R-SSC-211976">
    <property type="pathway name" value="Endogenous sterols"/>
</dbReference>
<dbReference type="UniPathway" id="UPA00229"/>
<dbReference type="UniPathway" id="UPA00296"/>
<dbReference type="Proteomes" id="UP000008227">
    <property type="component" value="Chromosome 7"/>
</dbReference>
<dbReference type="Proteomes" id="UP000314985">
    <property type="component" value="Chromosome 7"/>
</dbReference>
<dbReference type="Proteomes" id="UP000694570">
    <property type="component" value="Unplaced"/>
</dbReference>
<dbReference type="Proteomes" id="UP000694571">
    <property type="component" value="Unplaced"/>
</dbReference>
<dbReference type="Proteomes" id="UP000694720">
    <property type="component" value="Unplaced"/>
</dbReference>
<dbReference type="Proteomes" id="UP000694722">
    <property type="component" value="Unplaced"/>
</dbReference>
<dbReference type="Proteomes" id="UP000694723">
    <property type="component" value="Unplaced"/>
</dbReference>
<dbReference type="Proteomes" id="UP000694724">
    <property type="component" value="Unplaced"/>
</dbReference>
<dbReference type="Proteomes" id="UP000694725">
    <property type="component" value="Unplaced"/>
</dbReference>
<dbReference type="Proteomes" id="UP000694726">
    <property type="component" value="Unplaced"/>
</dbReference>
<dbReference type="Proteomes" id="UP000694727">
    <property type="component" value="Unplaced"/>
</dbReference>
<dbReference type="Proteomes" id="UP000694728">
    <property type="component" value="Unplaced"/>
</dbReference>
<dbReference type="Bgee" id="ENSSSCG00000025273">
    <property type="expression patterns" value="Expressed in ovary and 14 other cell types or tissues"/>
</dbReference>
<dbReference type="ExpressionAtlas" id="P10612">
    <property type="expression patterns" value="baseline and differential"/>
</dbReference>
<dbReference type="GO" id="GO:0005743">
    <property type="term" value="C:mitochondrial inner membrane"/>
    <property type="evidence" value="ECO:0000250"/>
    <property type="project" value="UniProtKB"/>
</dbReference>
<dbReference type="GO" id="GO:0008386">
    <property type="term" value="F:cholesterol monooxygenase (side-chain-cleaving) activity"/>
    <property type="evidence" value="ECO:0000250"/>
    <property type="project" value="UniProtKB"/>
</dbReference>
<dbReference type="GO" id="GO:0020037">
    <property type="term" value="F:heme binding"/>
    <property type="evidence" value="ECO:0000250"/>
    <property type="project" value="UniProtKB"/>
</dbReference>
<dbReference type="GO" id="GO:0005506">
    <property type="term" value="F:iron ion binding"/>
    <property type="evidence" value="ECO:0007669"/>
    <property type="project" value="InterPro"/>
</dbReference>
<dbReference type="GO" id="GO:0006700">
    <property type="term" value="P:C21-steroid hormone biosynthetic process"/>
    <property type="evidence" value="ECO:0000250"/>
    <property type="project" value="UniProtKB"/>
</dbReference>
<dbReference type="GO" id="GO:0071375">
    <property type="term" value="P:cellular response to peptide hormone stimulus"/>
    <property type="evidence" value="ECO:0000318"/>
    <property type="project" value="GO_Central"/>
</dbReference>
<dbReference type="GO" id="GO:0008203">
    <property type="term" value="P:cholesterol metabolic process"/>
    <property type="evidence" value="ECO:0000250"/>
    <property type="project" value="UniProtKB"/>
</dbReference>
<dbReference type="GO" id="GO:0034650">
    <property type="term" value="P:cortisol metabolic process"/>
    <property type="evidence" value="ECO:0000318"/>
    <property type="project" value="GO_Central"/>
</dbReference>
<dbReference type="GO" id="GO:0006704">
    <property type="term" value="P:glucocorticoid biosynthetic process"/>
    <property type="evidence" value="ECO:0000318"/>
    <property type="project" value="GO_Central"/>
</dbReference>
<dbReference type="FunFam" id="1.10.630.10:FF:000015">
    <property type="entry name" value="Cholesterol side-chain cleavage enzyme, mitochondrial"/>
    <property type="match status" value="1"/>
</dbReference>
<dbReference type="Gene3D" id="1.10.630.10">
    <property type="entry name" value="Cytochrome P450"/>
    <property type="match status" value="1"/>
</dbReference>
<dbReference type="InterPro" id="IPR050479">
    <property type="entry name" value="CYP11_CYP27_families"/>
</dbReference>
<dbReference type="InterPro" id="IPR001128">
    <property type="entry name" value="Cyt_P450"/>
</dbReference>
<dbReference type="InterPro" id="IPR017972">
    <property type="entry name" value="Cyt_P450_CS"/>
</dbReference>
<dbReference type="InterPro" id="IPR002401">
    <property type="entry name" value="Cyt_P450_E_grp-I"/>
</dbReference>
<dbReference type="InterPro" id="IPR036396">
    <property type="entry name" value="Cyt_P450_sf"/>
</dbReference>
<dbReference type="PANTHER" id="PTHR24279:SF3">
    <property type="entry name" value="CHOLESTEROL SIDE-CHAIN CLEAVAGE ENZYME, MITOCHONDRIAL"/>
    <property type="match status" value="1"/>
</dbReference>
<dbReference type="PANTHER" id="PTHR24279">
    <property type="entry name" value="CYTOCHROME P450"/>
    <property type="match status" value="1"/>
</dbReference>
<dbReference type="Pfam" id="PF00067">
    <property type="entry name" value="p450"/>
    <property type="match status" value="1"/>
</dbReference>
<dbReference type="PRINTS" id="PR00463">
    <property type="entry name" value="EP450I"/>
</dbReference>
<dbReference type="PRINTS" id="PR00385">
    <property type="entry name" value="P450"/>
</dbReference>
<dbReference type="SUPFAM" id="SSF48264">
    <property type="entry name" value="Cytochrome P450"/>
    <property type="match status" value="1"/>
</dbReference>
<dbReference type="PROSITE" id="PS00086">
    <property type="entry name" value="CYTOCHROME_P450"/>
    <property type="match status" value="1"/>
</dbReference>
<protein>
    <recommendedName>
        <fullName evidence="2">Cholesterol side-chain cleavage enzyme, mitochondrial</fullName>
        <ecNumber evidence="4 5">1.14.15.6</ecNumber>
    </recommendedName>
    <alternativeName>
        <fullName>CYPXIA1</fullName>
    </alternativeName>
    <alternativeName>
        <fullName>Cholesterol desmolase</fullName>
    </alternativeName>
    <alternativeName>
        <fullName>Cytochrome P450 11A1</fullName>
    </alternativeName>
    <alternativeName>
        <fullName>Cytochrome P450(scc)</fullName>
    </alternativeName>
</protein>
<reference key="1">
    <citation type="journal article" date="1989" name="Nucleic Acids Res.">
        <title>Nucleotide sequence of cytochrome P-450 cholesterol side-chain cleavage cDNA isolated from porcine testis.</title>
        <authorList>
            <person name="Mulheron G.W."/>
            <person name="Stone R.T."/>
            <person name="Miller W.L."/>
            <person name="Wise T.H."/>
        </authorList>
    </citation>
    <scope>NUCLEOTIDE SEQUENCE [MRNA]</scope>
    <source>
        <tissue>Testis</tissue>
    </source>
</reference>
<reference key="2">
    <citation type="journal article" date="1991" name="Biochem. Biophys. Res. Commun.">
        <title>Purification and properties of cytochrome P-450 (SCC) from pig testis mitochondria.</title>
        <authorList>
            <person name="Kuwada M."/>
            <person name="Kitajima R."/>
            <person name="Suzuki H."/>
            <person name="Horie S."/>
        </authorList>
    </citation>
    <scope>PROTEIN SEQUENCE OF 41-61</scope>
    <scope>FUNCTION</scope>
    <scope>CATALYTIC ACTIVITY</scope>
    <source>
        <tissue>Testis</tissue>
    </source>
</reference>
<reference key="3">
    <citation type="journal article" date="1991" name="Int. J. Biochem.">
        <title>Purification and comparative characterization of cytochrome P-450scc from porcine adrenocortical mitochondria.</title>
        <authorList>
            <person name="Iwahashi K."/>
            <person name="Tsubaki M."/>
            <person name="Miyatake A."/>
            <person name="Ichikawa Y."/>
        </authorList>
    </citation>
    <scope>PROTEIN SEQUENCE OF 40-64</scope>
    <scope>FUNCTION</scope>
    <scope>CATALYTIC ACTIVITY</scope>
</reference>
<organism>
    <name type="scientific">Sus scrofa</name>
    <name type="common">Pig</name>
    <dbReference type="NCBI Taxonomy" id="9823"/>
    <lineage>
        <taxon>Eukaryota</taxon>
        <taxon>Metazoa</taxon>
        <taxon>Chordata</taxon>
        <taxon>Craniata</taxon>
        <taxon>Vertebrata</taxon>
        <taxon>Euteleostomi</taxon>
        <taxon>Mammalia</taxon>
        <taxon>Eutheria</taxon>
        <taxon>Laurasiatheria</taxon>
        <taxon>Artiodactyla</taxon>
        <taxon>Suina</taxon>
        <taxon>Suidae</taxon>
        <taxon>Sus</taxon>
    </lineage>
</organism>
<sequence>MLARGLALRSVLVKGCQPFLSAPRECPGHPRVGTGEGACISTKTPRPFSEIPSPGDNGWINLYRFWKEKGTQKIHYHHVQNFQKYGPIYREKLGNLESVYIIDPEDVALLFKFEGPNPERYNIPPWVAYHQHYQKPVGVLLKKSGAWKKDRLVLNTEVMAPEAIKNFIPLLDTVSQDFVGVLHRRIKQQGSGKFSGDIREDLFRFAFESITNVIFGERLGMLEEIVDPEAQKFIDAVYQMFHTSVPMLNLPPDLFRLFRTKTWRDHVAAWDTIFNKAEKYTQNFYWDLRRKREFNNYPGILYRLLGNDKLLSEDVKANVTEMLAGGVDTTSMTLQWHLYEMARSLNVQEMLREEVLNARRQAQGDTSKMLQLVPLLKASIKETLRLHPISVTLQRYLVNDLVLRDYMIPAKTLVQVAVYAMGRDPAFFSNPGQFDPTRWLGKERDLIHFRNLGFGWGVRQCVGRRIAELEMTLFLIHILENFKVELQHFSDVDTIFNLILMPDKPIFLVFRPFNQDPLQA</sequence>
<evidence type="ECO:0000250" key="1"/>
<evidence type="ECO:0000250" key="2">
    <source>
        <dbReference type="UniProtKB" id="P05108"/>
    </source>
</evidence>
<evidence type="ECO:0000250" key="3">
    <source>
        <dbReference type="UniProtKB" id="P14137"/>
    </source>
</evidence>
<evidence type="ECO:0000269" key="4">
    <source>
    </source>
</evidence>
<evidence type="ECO:0000269" key="5">
    <source>
    </source>
</evidence>
<evidence type="ECO:0000305" key="6"/>
<evidence type="ECO:0000305" key="7">
    <source>
    </source>
</evidence>
<evidence type="ECO:0000305" key="8">
    <source>
    </source>
</evidence>
<keyword id="KW-0153">Cholesterol metabolism</keyword>
<keyword id="KW-0903">Direct protein sequencing</keyword>
<keyword id="KW-0349">Heme</keyword>
<keyword id="KW-0408">Iron</keyword>
<keyword id="KW-0443">Lipid metabolism</keyword>
<keyword id="KW-0472">Membrane</keyword>
<keyword id="KW-0479">Metal-binding</keyword>
<keyword id="KW-0496">Mitochondrion</keyword>
<keyword id="KW-0999">Mitochondrion inner membrane</keyword>
<keyword id="KW-0503">Monooxygenase</keyword>
<keyword id="KW-0560">Oxidoreductase</keyword>
<keyword id="KW-1185">Reference proteome</keyword>
<keyword id="KW-0753">Steroid metabolism</keyword>
<keyword id="KW-0755">Steroidogenesis</keyword>
<keyword id="KW-1207">Sterol metabolism</keyword>
<keyword id="KW-0809">Transit peptide</keyword>
<feature type="transit peptide" description="Mitochondrion" evidence="4">
    <location>
        <begin position="1"/>
        <end position="39"/>
    </location>
</feature>
<feature type="chain" id="PRO_0000003588" description="Cholesterol side-chain cleavage enzyme, mitochondrial">
    <location>
        <begin position="40"/>
        <end position="520"/>
    </location>
</feature>
<feature type="binding site" description="axial binding residue" evidence="2">
    <location>
        <position position="461"/>
    </location>
    <ligand>
        <name>heme</name>
        <dbReference type="ChEBI" id="CHEBI:30413"/>
    </ligand>
    <ligandPart>
        <name>Fe</name>
        <dbReference type="ChEBI" id="CHEBI:18248"/>
    </ligandPart>
</feature>
<feature type="sequence conflict" description="In Ref. 3; AA sequence." evidence="6" ref="3">
    <original>R</original>
    <variation>F</variation>
    <location>
        <position position="46"/>
    </location>
</feature>
<gene>
    <name type="primary">CYP11A1</name>
</gene>
<comment type="function">
    <text evidence="4 5">A cytochrome P450 monooxygenase that catalyzes the side-chain hydroxylation and cleavage of cholesterol to pregnenolone, the precursor of most steroid hormones (PubMed:1773895, PubMed:2039527). Catalyzes three sequential oxidation reactions of cholesterol, namely the hydroxylation at C22 followed with the hydroxylation at C20 to yield 20R,22R-hydroxycholesterol that is further cleaved between C20 and C22 to yield the C21-steroid pregnenolone and 4-methylpentanal (PubMed:1773895, PubMed:2039527). Mechanistically, uses molecular oxygen inserting one oxygen atom into a substrate and reducing the second into a water molecule. Two electrons are provided by NADPH via a two-protein mitochondrial transfer system comprising flavoprotein FDXR (adrenodoxin/ferredoxin reductase) and nonheme iron-sulfur protein FDX1 or FDX2 (adrenodoxin/ferredoxin) (PubMed:1773895, PubMed:2039527).</text>
</comment>
<comment type="catalytic activity">
    <reaction evidence="4 5">
        <text>6 reduced [adrenodoxin] + cholesterol + 3 O2 + 6 H(+) = 4-methylpentanal + pregnenolone + 6 oxidized [adrenodoxin] + 4 H2O</text>
        <dbReference type="Rhea" id="RHEA:35739"/>
        <dbReference type="Rhea" id="RHEA-COMP:9998"/>
        <dbReference type="Rhea" id="RHEA-COMP:9999"/>
        <dbReference type="ChEBI" id="CHEBI:15377"/>
        <dbReference type="ChEBI" id="CHEBI:15378"/>
        <dbReference type="ChEBI" id="CHEBI:15379"/>
        <dbReference type="ChEBI" id="CHEBI:16113"/>
        <dbReference type="ChEBI" id="CHEBI:16581"/>
        <dbReference type="ChEBI" id="CHEBI:17998"/>
        <dbReference type="ChEBI" id="CHEBI:33737"/>
        <dbReference type="ChEBI" id="CHEBI:33738"/>
        <dbReference type="EC" id="1.14.15.6"/>
    </reaction>
    <physiologicalReaction direction="left-to-right" evidence="7 8">
        <dbReference type="Rhea" id="RHEA:35740"/>
    </physiologicalReaction>
</comment>
<comment type="catalytic activity">
    <reaction evidence="2">
        <text>2 reduced [adrenodoxin] + cholesterol + O2 + 2 H(+) = (22R)-hydroxycholesterol + 2 oxidized [adrenodoxin] + H2O</text>
        <dbReference type="Rhea" id="RHEA:34335"/>
        <dbReference type="Rhea" id="RHEA-COMP:9998"/>
        <dbReference type="Rhea" id="RHEA-COMP:9999"/>
        <dbReference type="ChEBI" id="CHEBI:15377"/>
        <dbReference type="ChEBI" id="CHEBI:15378"/>
        <dbReference type="ChEBI" id="CHEBI:15379"/>
        <dbReference type="ChEBI" id="CHEBI:16113"/>
        <dbReference type="ChEBI" id="CHEBI:33737"/>
        <dbReference type="ChEBI" id="CHEBI:33738"/>
        <dbReference type="ChEBI" id="CHEBI:67237"/>
    </reaction>
    <physiologicalReaction direction="left-to-right" evidence="2">
        <dbReference type="Rhea" id="RHEA:34336"/>
    </physiologicalReaction>
</comment>
<comment type="catalytic activity">
    <reaction evidence="2">
        <text>(22R)-hydroxycholesterol + 2 reduced [adrenodoxin] + O2 + 2 H(+) = (20R,22R)-20,22-dihydroxycholesterol + 2 oxidized [adrenodoxin] + H2O</text>
        <dbReference type="Rhea" id="RHEA:34339"/>
        <dbReference type="Rhea" id="RHEA-COMP:9998"/>
        <dbReference type="Rhea" id="RHEA-COMP:9999"/>
        <dbReference type="ChEBI" id="CHEBI:1294"/>
        <dbReference type="ChEBI" id="CHEBI:15377"/>
        <dbReference type="ChEBI" id="CHEBI:15378"/>
        <dbReference type="ChEBI" id="CHEBI:15379"/>
        <dbReference type="ChEBI" id="CHEBI:33737"/>
        <dbReference type="ChEBI" id="CHEBI:33738"/>
        <dbReference type="ChEBI" id="CHEBI:67237"/>
    </reaction>
    <physiologicalReaction direction="left-to-right" evidence="2">
        <dbReference type="Rhea" id="RHEA:34340"/>
    </physiologicalReaction>
</comment>
<comment type="catalytic activity">
    <reaction evidence="2">
        <text>(20R,22R)-20,22-dihydroxycholesterol + 2 reduced [adrenodoxin] + O2 + 2 H(+) = 4-methylpentanal + pregnenolone + 2 oxidized [adrenodoxin] + 2 H2O</text>
        <dbReference type="Rhea" id="RHEA:34343"/>
        <dbReference type="Rhea" id="RHEA-COMP:9998"/>
        <dbReference type="Rhea" id="RHEA-COMP:9999"/>
        <dbReference type="ChEBI" id="CHEBI:1294"/>
        <dbReference type="ChEBI" id="CHEBI:15377"/>
        <dbReference type="ChEBI" id="CHEBI:15378"/>
        <dbReference type="ChEBI" id="CHEBI:15379"/>
        <dbReference type="ChEBI" id="CHEBI:16581"/>
        <dbReference type="ChEBI" id="CHEBI:17998"/>
        <dbReference type="ChEBI" id="CHEBI:33737"/>
        <dbReference type="ChEBI" id="CHEBI:33738"/>
    </reaction>
    <physiologicalReaction direction="left-to-right" evidence="2">
        <dbReference type="Rhea" id="RHEA:34344"/>
    </physiologicalReaction>
</comment>
<comment type="cofactor">
    <cofactor evidence="2">
        <name>heme</name>
        <dbReference type="ChEBI" id="CHEBI:30413"/>
    </cofactor>
</comment>
<comment type="pathway">
    <text evidence="2">Lipid metabolism; C21-steroid hormone metabolism.</text>
</comment>
<comment type="pathway">
    <text evidence="2">Steroid metabolism; cholesterol metabolism.</text>
</comment>
<comment type="subunit">
    <text evidence="1">Interacts with FDX1/adrenodoxin.</text>
</comment>
<comment type="subcellular location">
    <subcellularLocation>
        <location evidence="3">Mitochondrion inner membrane</location>
        <topology evidence="6">Peripheral membrane protein</topology>
    </subcellularLocation>
    <text evidence="3">Localizes to the matrix side of the mitochondrion inner membrane.</text>
</comment>
<comment type="similarity">
    <text evidence="6">Belongs to the cytochrome P450 family.</text>
</comment>
<accession>P10612</accession>
<name>CP11A_PIG</name>
<proteinExistence type="evidence at protein level"/>